<evidence type="ECO:0000255" key="1">
    <source>
        <dbReference type="PROSITE-ProRule" id="PRU00176"/>
    </source>
</evidence>
<evidence type="ECO:0000256" key="2">
    <source>
        <dbReference type="SAM" id="MobiDB-lite"/>
    </source>
</evidence>
<evidence type="ECO:0000269" key="3">
    <source>
    </source>
</evidence>
<evidence type="ECO:0000269" key="4">
    <source>
    </source>
</evidence>
<evidence type="ECO:0000269" key="5">
    <source>
    </source>
</evidence>
<evidence type="ECO:0000269" key="6">
    <source>
    </source>
</evidence>
<evidence type="ECO:0000269" key="7">
    <source>
    </source>
</evidence>
<evidence type="ECO:0000305" key="8"/>
<evidence type="ECO:0007744" key="9">
    <source>
    </source>
</evidence>
<dbReference type="EMBL" id="Z71562">
    <property type="protein sequence ID" value="CAA96203.1"/>
    <property type="molecule type" value="Genomic_DNA"/>
</dbReference>
<dbReference type="EMBL" id="AY558016">
    <property type="protein sequence ID" value="AAS56342.1"/>
    <property type="molecule type" value="Genomic_DNA"/>
</dbReference>
<dbReference type="EMBL" id="BK006947">
    <property type="protein sequence ID" value="DAA10273.1"/>
    <property type="molecule type" value="Genomic_DNA"/>
</dbReference>
<dbReference type="PIR" id="S63260">
    <property type="entry name" value="S63260"/>
</dbReference>
<dbReference type="RefSeq" id="NP_014113.1">
    <property type="nucleotide sequence ID" value="NM_001183124.1"/>
</dbReference>
<dbReference type="SMR" id="P53830"/>
<dbReference type="BioGRID" id="35551">
    <property type="interactions" value="48"/>
</dbReference>
<dbReference type="ComplexPortal" id="CPX-26">
    <property type="entry name" value="U2 small nuclear ribonucleoprotein complex"/>
</dbReference>
<dbReference type="DIP" id="DIP-2316N"/>
<dbReference type="FunCoup" id="P53830">
    <property type="interactions" value="158"/>
</dbReference>
<dbReference type="IntAct" id="P53830">
    <property type="interactions" value="9"/>
</dbReference>
<dbReference type="MINT" id="P53830"/>
<dbReference type="STRING" id="4932.YNL286W"/>
<dbReference type="iPTMnet" id="P53830"/>
<dbReference type="PaxDb" id="4932-YNL286W"/>
<dbReference type="PeptideAtlas" id="P53830"/>
<dbReference type="EnsemblFungi" id="YNL286W_mRNA">
    <property type="protein sequence ID" value="YNL286W"/>
    <property type="gene ID" value="YNL286W"/>
</dbReference>
<dbReference type="GeneID" id="855430"/>
<dbReference type="KEGG" id="sce:YNL286W"/>
<dbReference type="AGR" id="SGD:S000005230"/>
<dbReference type="SGD" id="S000005230">
    <property type="gene designation" value="CUS2"/>
</dbReference>
<dbReference type="VEuPathDB" id="FungiDB:YNL286W"/>
<dbReference type="eggNOG" id="KOG1548">
    <property type="taxonomic scope" value="Eukaryota"/>
</dbReference>
<dbReference type="GeneTree" id="ENSGT00390000009902"/>
<dbReference type="HOGENOM" id="CLU_026945_2_0_1"/>
<dbReference type="InParanoid" id="P53830"/>
<dbReference type="OMA" id="IVISKPM"/>
<dbReference type="OrthoDB" id="10258585at2759"/>
<dbReference type="BioCyc" id="YEAST:G3O-33276-MONOMER"/>
<dbReference type="BioGRID-ORCS" id="855430">
    <property type="hits" value="0 hits in 10 CRISPR screens"/>
</dbReference>
<dbReference type="PRO" id="PR:P53830"/>
<dbReference type="Proteomes" id="UP000002311">
    <property type="component" value="Chromosome XIV"/>
</dbReference>
<dbReference type="RNAct" id="P53830">
    <property type="molecule type" value="protein"/>
</dbReference>
<dbReference type="GO" id="GO:0005634">
    <property type="term" value="C:nucleus"/>
    <property type="evidence" value="ECO:0000303"/>
    <property type="project" value="ComplexPortal"/>
</dbReference>
<dbReference type="GO" id="GO:0005681">
    <property type="term" value="C:spliceosomal complex"/>
    <property type="evidence" value="ECO:0000303"/>
    <property type="project" value="ComplexPortal"/>
</dbReference>
<dbReference type="GO" id="GO:0005686">
    <property type="term" value="C:U2 snRNP"/>
    <property type="evidence" value="ECO:0000353"/>
    <property type="project" value="SGD"/>
</dbReference>
<dbReference type="GO" id="GO:0005684">
    <property type="term" value="C:U2-type spliceosomal complex"/>
    <property type="evidence" value="ECO:0000318"/>
    <property type="project" value="GO_Central"/>
</dbReference>
<dbReference type="GO" id="GO:0003723">
    <property type="term" value="F:RNA binding"/>
    <property type="evidence" value="ECO:0000318"/>
    <property type="project" value="GO_Central"/>
</dbReference>
<dbReference type="GO" id="GO:0030620">
    <property type="term" value="F:U2 snRNA binding"/>
    <property type="evidence" value="ECO:0000314"/>
    <property type="project" value="GO_Central"/>
</dbReference>
<dbReference type="GO" id="GO:0000398">
    <property type="term" value="P:mRNA splicing, via spliceosome"/>
    <property type="evidence" value="ECO:0000303"/>
    <property type="project" value="ComplexPortal"/>
</dbReference>
<dbReference type="GO" id="GO:0034337">
    <property type="term" value="P:RNA folding"/>
    <property type="evidence" value="ECO:0000314"/>
    <property type="project" value="SGD"/>
</dbReference>
<dbReference type="GO" id="GO:1903241">
    <property type="term" value="P:U2-type prespliceosome assembly"/>
    <property type="evidence" value="ECO:0000315"/>
    <property type="project" value="GO_Central"/>
</dbReference>
<dbReference type="CDD" id="cd12281">
    <property type="entry name" value="RRM1_TatSF1_like"/>
    <property type="match status" value="1"/>
</dbReference>
<dbReference type="CDD" id="cd12285">
    <property type="entry name" value="RRM3_RBM39_like"/>
    <property type="match status" value="1"/>
</dbReference>
<dbReference type="FunFam" id="3.30.70.330:FF:001119">
    <property type="entry name" value="Cold sensitive u2 snRNA suppressor"/>
    <property type="match status" value="1"/>
</dbReference>
<dbReference type="Gene3D" id="3.30.70.330">
    <property type="match status" value="2"/>
</dbReference>
<dbReference type="InterPro" id="IPR012677">
    <property type="entry name" value="Nucleotide-bd_a/b_plait_sf"/>
</dbReference>
<dbReference type="InterPro" id="IPR035979">
    <property type="entry name" value="RBD_domain_sf"/>
</dbReference>
<dbReference type="InterPro" id="IPR000504">
    <property type="entry name" value="RRM_dom"/>
</dbReference>
<dbReference type="InterPro" id="IPR034393">
    <property type="entry name" value="TatSF1-like"/>
</dbReference>
<dbReference type="InterPro" id="IPR034392">
    <property type="entry name" value="TatSF1-like_RRM1"/>
</dbReference>
<dbReference type="PANTHER" id="PTHR15608:SF0">
    <property type="entry name" value="HIV TAT-SPECIFIC FACTOR 1"/>
    <property type="match status" value="1"/>
</dbReference>
<dbReference type="PANTHER" id="PTHR15608">
    <property type="entry name" value="SPLICING FACTOR U2AF-ASSOCIATED PROTEIN 2"/>
    <property type="match status" value="1"/>
</dbReference>
<dbReference type="Pfam" id="PF00076">
    <property type="entry name" value="RRM_1"/>
    <property type="match status" value="2"/>
</dbReference>
<dbReference type="SMART" id="SM00360">
    <property type="entry name" value="RRM"/>
    <property type="match status" value="2"/>
</dbReference>
<dbReference type="SUPFAM" id="SSF54928">
    <property type="entry name" value="RNA-binding domain, RBD"/>
    <property type="match status" value="2"/>
</dbReference>
<dbReference type="PROSITE" id="PS50102">
    <property type="entry name" value="RRM"/>
    <property type="match status" value="1"/>
</dbReference>
<protein>
    <recommendedName>
        <fullName>Cold sensitive U2 snRNA suppressor 2</fullName>
    </recommendedName>
</protein>
<keyword id="KW-0507">mRNA processing</keyword>
<keyword id="KW-0508">mRNA splicing</keyword>
<keyword id="KW-0597">Phosphoprotein</keyword>
<keyword id="KW-1185">Reference proteome</keyword>
<keyword id="KW-0677">Repeat</keyword>
<keyword id="KW-0694">RNA-binding</keyword>
<keyword id="KW-0747">Spliceosome</keyword>
<organism>
    <name type="scientific">Saccharomyces cerevisiae (strain ATCC 204508 / S288c)</name>
    <name type="common">Baker's yeast</name>
    <dbReference type="NCBI Taxonomy" id="559292"/>
    <lineage>
        <taxon>Eukaryota</taxon>
        <taxon>Fungi</taxon>
        <taxon>Dikarya</taxon>
        <taxon>Ascomycota</taxon>
        <taxon>Saccharomycotina</taxon>
        <taxon>Saccharomycetes</taxon>
        <taxon>Saccharomycetales</taxon>
        <taxon>Saccharomycetaceae</taxon>
        <taxon>Saccharomyces</taxon>
    </lineage>
</organism>
<name>CUS2_YEAST</name>
<comment type="function">
    <text evidence="3 6 7">U2 snRNP protein which helps to refold U2 into a structure favorable for its binding to SF3b and SF3a prior to spliceosome assembly. Mediates functional interactions between U2 RNA and PRP5. Enforces ATP dependence during formation of the prespliceosome by brokering an interaction between PRP5 and the U2 snRNP that depends on correct U2 RNA structure.</text>
</comment>
<comment type="subunit">
    <text evidence="4 7">Interacts with PRP11. Associates with the U2 snRNA.</text>
</comment>
<comment type="interaction">
    <interactant intactId="EBI-28299">
        <id>P53830</id>
    </interactant>
    <interactant intactId="EBI-664">
        <id>P49955</id>
        <label>HSH155</label>
    </interactant>
    <organismsDiffer>false</organismsDiffer>
    <experiments>3</experiments>
</comment>
<comment type="miscellaneous">
    <text evidence="5">Present with 1360 molecules/cell in log phase SD medium.</text>
</comment>
<comment type="similarity">
    <text evidence="8">Belongs to the HTATSF1 family.</text>
</comment>
<feature type="chain" id="PRO_0000082037" description="Cold sensitive U2 snRNA suppressor 2">
    <location>
        <begin position="1"/>
        <end position="285"/>
    </location>
</feature>
<feature type="domain" description="RRM 1" evidence="1">
    <location>
        <begin position="45"/>
        <end position="130"/>
    </location>
</feature>
<feature type="domain" description="RRM 2" evidence="1">
    <location>
        <begin position="183"/>
        <end position="265"/>
    </location>
</feature>
<feature type="region of interest" description="Disordered" evidence="2">
    <location>
        <begin position="135"/>
        <end position="154"/>
    </location>
</feature>
<feature type="region of interest" description="Disordered" evidence="2">
    <location>
        <begin position="265"/>
        <end position="285"/>
    </location>
</feature>
<feature type="compositionally biased region" description="Basic and acidic residues" evidence="2">
    <location>
        <begin position="135"/>
        <end position="149"/>
    </location>
</feature>
<feature type="compositionally biased region" description="Acidic residues" evidence="2">
    <location>
        <begin position="276"/>
        <end position="285"/>
    </location>
</feature>
<feature type="modified residue" description="Phosphoserine" evidence="9">
    <location>
        <position position="163"/>
    </location>
</feature>
<feature type="sequence conflict" description="In Ref. 3; AAS56342." evidence="8" ref="3">
    <original>F</original>
    <variation>L</variation>
    <location>
        <position position="235"/>
    </location>
</feature>
<gene>
    <name type="primary">CUS2</name>
    <name type="ordered locus">YNL286W</name>
    <name type="ORF">N0549</name>
</gene>
<proteinExistence type="evidence at protein level"/>
<reference key="1">
    <citation type="journal article" date="1997" name="Nature">
        <title>The nucleotide sequence of Saccharomyces cerevisiae chromosome XIV and its evolutionary implications.</title>
        <authorList>
            <person name="Philippsen P."/>
            <person name="Kleine K."/>
            <person name="Poehlmann R."/>
            <person name="Duesterhoeft A."/>
            <person name="Hamberg K."/>
            <person name="Hegemann J.H."/>
            <person name="Obermaier B."/>
            <person name="Urrestarazu L.A."/>
            <person name="Aert R."/>
            <person name="Albermann K."/>
            <person name="Altmann R."/>
            <person name="Andre B."/>
            <person name="Baladron V."/>
            <person name="Ballesta J.P.G."/>
            <person name="Becam A.-M."/>
            <person name="Beinhauer J.D."/>
            <person name="Boskovic J."/>
            <person name="Buitrago M.J."/>
            <person name="Bussereau F."/>
            <person name="Coster F."/>
            <person name="Crouzet M."/>
            <person name="D'Angelo M."/>
            <person name="Dal Pero F."/>
            <person name="De Antoni A."/>
            <person name="del Rey F."/>
            <person name="Doignon F."/>
            <person name="Domdey H."/>
            <person name="Dubois E."/>
            <person name="Fiedler T.A."/>
            <person name="Fleig U."/>
            <person name="Floeth M."/>
            <person name="Fritz C."/>
            <person name="Gaillardin C."/>
            <person name="Garcia-Cantalejo J.M."/>
            <person name="Glansdorff N."/>
            <person name="Goffeau A."/>
            <person name="Gueldener U."/>
            <person name="Herbert C.J."/>
            <person name="Heumann K."/>
            <person name="Heuss-Neitzel D."/>
            <person name="Hilbert H."/>
            <person name="Hinni K."/>
            <person name="Iraqui Houssaini I."/>
            <person name="Jacquet M."/>
            <person name="Jimenez A."/>
            <person name="Jonniaux J.-L."/>
            <person name="Karpfinger-Hartl L."/>
            <person name="Lanfranchi G."/>
            <person name="Lepingle A."/>
            <person name="Levesque H."/>
            <person name="Lyck R."/>
            <person name="Maftahi M."/>
            <person name="Mallet L."/>
            <person name="Maurer C.T.C."/>
            <person name="Messenguy F."/>
            <person name="Mewes H.-W."/>
            <person name="Moestl D."/>
            <person name="Nasr F."/>
            <person name="Nicaud J.-M."/>
            <person name="Niedenthal R.K."/>
            <person name="Pandolfo D."/>
            <person name="Pierard A."/>
            <person name="Piravandi E."/>
            <person name="Planta R.J."/>
            <person name="Pohl T.M."/>
            <person name="Purnelle B."/>
            <person name="Rebischung C."/>
            <person name="Remacha M.A."/>
            <person name="Revuelta J.L."/>
            <person name="Rinke M."/>
            <person name="Saiz J.E."/>
            <person name="Sartorello F."/>
            <person name="Scherens B."/>
            <person name="Sen-Gupta M."/>
            <person name="Soler-Mira A."/>
            <person name="Urbanus J.H.M."/>
            <person name="Valle G."/>
            <person name="Van Dyck L."/>
            <person name="Verhasselt P."/>
            <person name="Vierendeels F."/>
            <person name="Vissers S."/>
            <person name="Voet M."/>
            <person name="Volckaert G."/>
            <person name="Wach A."/>
            <person name="Wambutt R."/>
            <person name="Wedler H."/>
            <person name="Zollner A."/>
            <person name="Hani J."/>
        </authorList>
    </citation>
    <scope>NUCLEOTIDE SEQUENCE [LARGE SCALE GENOMIC DNA]</scope>
    <source>
        <strain>ATCC 204508 / S288c</strain>
    </source>
</reference>
<reference key="2">
    <citation type="journal article" date="2014" name="G3 (Bethesda)">
        <title>The reference genome sequence of Saccharomyces cerevisiae: Then and now.</title>
        <authorList>
            <person name="Engel S.R."/>
            <person name="Dietrich F.S."/>
            <person name="Fisk D.G."/>
            <person name="Binkley G."/>
            <person name="Balakrishnan R."/>
            <person name="Costanzo M.C."/>
            <person name="Dwight S.S."/>
            <person name="Hitz B.C."/>
            <person name="Karra K."/>
            <person name="Nash R.S."/>
            <person name="Weng S."/>
            <person name="Wong E.D."/>
            <person name="Lloyd P."/>
            <person name="Skrzypek M.S."/>
            <person name="Miyasato S.R."/>
            <person name="Simison M."/>
            <person name="Cherry J.M."/>
        </authorList>
    </citation>
    <scope>GENOME REANNOTATION</scope>
    <source>
        <strain>ATCC 204508 / S288c</strain>
    </source>
</reference>
<reference key="3">
    <citation type="journal article" date="2007" name="Genome Res.">
        <title>Approaching a complete repository of sequence-verified protein-encoding clones for Saccharomyces cerevisiae.</title>
        <authorList>
            <person name="Hu Y."/>
            <person name="Rolfs A."/>
            <person name="Bhullar B."/>
            <person name="Murthy T.V.S."/>
            <person name="Zhu C."/>
            <person name="Berger M.F."/>
            <person name="Camargo A.A."/>
            <person name="Kelley F."/>
            <person name="McCarron S."/>
            <person name="Jepson D."/>
            <person name="Richardson A."/>
            <person name="Raphael J."/>
            <person name="Moreira D."/>
            <person name="Taycher E."/>
            <person name="Zuo D."/>
            <person name="Mohr S."/>
            <person name="Kane M.F."/>
            <person name="Williamson J."/>
            <person name="Simpson A.J.G."/>
            <person name="Bulyk M.L."/>
            <person name="Harlow E."/>
            <person name="Marsischky G."/>
            <person name="Kolodner R.D."/>
            <person name="LaBaer J."/>
        </authorList>
    </citation>
    <scope>NUCLEOTIDE SEQUENCE [GENOMIC DNA]</scope>
    <source>
        <strain>ATCC 204508 / S288c</strain>
    </source>
</reference>
<reference key="4">
    <citation type="journal article" date="1998" name="Mol. Cell. Biol.">
        <title>CUS2, a yeast homolog of human Tat-SF1, rescues function of misfolded U2 through an unusual RNA recognition motif.</title>
        <authorList>
            <person name="Yan D."/>
            <person name="Perriman R."/>
            <person name="Igel H."/>
            <person name="Howe K.J."/>
            <person name="Neville M."/>
            <person name="Ares M. Jr."/>
        </authorList>
    </citation>
    <scope>FUNCTION</scope>
    <scope>INTERACTION WITH PRP11</scope>
    <scope>ASSOCIATION WITH U2</scope>
</reference>
<reference key="5">
    <citation type="journal article" date="2000" name="Genes Dev.">
        <title>ATP can be dispensable for prespliceosome formation in yeast.</title>
        <authorList>
            <person name="Perriman R."/>
            <person name="Ares M. Jr."/>
        </authorList>
    </citation>
    <scope>FUNCTION</scope>
</reference>
<reference key="6">
    <citation type="journal article" date="2002" name="Mol. Cell">
        <title>Composition and functional characterization of the yeast spliceosomal penta-snRNP.</title>
        <authorList>
            <person name="Stevens S.W."/>
            <person name="Ryan D.E."/>
            <person name="Ge H.Y."/>
            <person name="Moore R.E."/>
            <person name="Young M.K."/>
            <person name="Lee T.D."/>
            <person name="Abelson J."/>
        </authorList>
    </citation>
    <scope>IDENTIFICATION IN THE U2 SNRNP</scope>
    <scope>IDENTIFICATION BY MASS SPECTROMETRY</scope>
</reference>
<reference key="7">
    <citation type="journal article" date="2003" name="Nature">
        <title>Global analysis of protein expression in yeast.</title>
        <authorList>
            <person name="Ghaemmaghami S."/>
            <person name="Huh W.-K."/>
            <person name="Bower K."/>
            <person name="Howson R.W."/>
            <person name="Belle A."/>
            <person name="Dephoure N."/>
            <person name="O'Shea E.K."/>
            <person name="Weissman J.S."/>
        </authorList>
    </citation>
    <scope>LEVEL OF PROTEIN EXPRESSION [LARGE SCALE ANALYSIS]</scope>
</reference>
<reference key="8">
    <citation type="journal article" date="2007" name="J. Proteome Res.">
        <title>Large-scale phosphorylation analysis of alpha-factor-arrested Saccharomyces cerevisiae.</title>
        <authorList>
            <person name="Li X."/>
            <person name="Gerber S.A."/>
            <person name="Rudner A.D."/>
            <person name="Beausoleil S.A."/>
            <person name="Haas W."/>
            <person name="Villen J."/>
            <person name="Elias J.E."/>
            <person name="Gygi S.P."/>
        </authorList>
    </citation>
    <scope>PHOSPHORYLATION [LARGE SCALE ANALYSIS] AT SER-163</scope>
    <scope>IDENTIFICATION BY MASS SPECTROMETRY [LARGE SCALE ANALYSIS]</scope>
    <source>
        <strain>ADR376</strain>
    </source>
</reference>
<reference key="9">
    <citation type="journal article" date="2007" name="Mol. Cell">
        <title>Competition between the ATPase Prp5 and branch region-U2 snRNA pairing modulates the fidelity of spliceosome assembly.</title>
        <authorList>
            <person name="Xu Y.Z."/>
            <person name="Query C.C."/>
        </authorList>
    </citation>
    <scope>FUNCTION</scope>
</reference>
<accession>P53830</accession>
<accession>D6W0Q7</accession>
<accession>E9P8U4</accession>
<sequence>MDADELELKGHLKKLKKEELLRRKQLKESNLQKRELEYNNASKNTSIYISGLPTDKTTKEGLTEQFCKYGMIRTNRDGEPLCKLYVNDKGAFKGDALITYSKEESVTLAIEMMNESIFLGKQIRVERAQFQNKEGDNMHGKENDLKEFNGPEPPIKRLKKAKSEGEGEVIDYNDDESLAKADRTVIFANVFNIYKSYTNDDINDIQEDLLEGCEEIGQVDSISVSPNKGEATVVFKNNKVALQCCKIMTGRYFDGQKLLAFISGDENTSSTSDKNEDSEVEDDLI</sequence>